<reference key="1">
    <citation type="journal article" date="2002" name="Nat. Biotechnol.">
        <title>Genome sequence of the dissimilatory metal ion-reducing bacterium Shewanella oneidensis.</title>
        <authorList>
            <person name="Heidelberg J.F."/>
            <person name="Paulsen I.T."/>
            <person name="Nelson K.E."/>
            <person name="Gaidos E.J."/>
            <person name="Nelson W.C."/>
            <person name="Read T.D."/>
            <person name="Eisen J.A."/>
            <person name="Seshadri R."/>
            <person name="Ward N.L."/>
            <person name="Methe B.A."/>
            <person name="Clayton R.A."/>
            <person name="Meyer T."/>
            <person name="Tsapin A."/>
            <person name="Scott J."/>
            <person name="Beanan M.J."/>
            <person name="Brinkac L.M."/>
            <person name="Daugherty S.C."/>
            <person name="DeBoy R.T."/>
            <person name="Dodson R.J."/>
            <person name="Durkin A.S."/>
            <person name="Haft D.H."/>
            <person name="Kolonay J.F."/>
            <person name="Madupu R."/>
            <person name="Peterson J.D."/>
            <person name="Umayam L.A."/>
            <person name="White O."/>
            <person name="Wolf A.M."/>
            <person name="Vamathevan J.J."/>
            <person name="Weidman J.F."/>
            <person name="Impraim M."/>
            <person name="Lee K."/>
            <person name="Berry K.J."/>
            <person name="Lee C."/>
            <person name="Mueller J."/>
            <person name="Khouri H.M."/>
            <person name="Gill J."/>
            <person name="Utterback T.R."/>
            <person name="McDonald L.A."/>
            <person name="Feldblyum T.V."/>
            <person name="Smith H.O."/>
            <person name="Venter J.C."/>
            <person name="Nealson K.H."/>
            <person name="Fraser C.M."/>
        </authorList>
    </citation>
    <scope>NUCLEOTIDE SEQUENCE [LARGE SCALE GENOMIC DNA]</scope>
    <source>
        <strain>ATCC 700550 / JCM 31522 / CIP 106686 / LMG 19005 / NCIMB 14063 / MR-1</strain>
    </source>
</reference>
<accession>Q8EBR4</accession>
<name>TRUD_SHEON</name>
<comment type="function">
    <text evidence="1">Responsible for synthesis of pseudouridine from uracil-13 in transfer RNAs.</text>
</comment>
<comment type="catalytic activity">
    <reaction evidence="1">
        <text>uridine(13) in tRNA = pseudouridine(13) in tRNA</text>
        <dbReference type="Rhea" id="RHEA:42540"/>
        <dbReference type="Rhea" id="RHEA-COMP:10105"/>
        <dbReference type="Rhea" id="RHEA-COMP:10106"/>
        <dbReference type="ChEBI" id="CHEBI:65314"/>
        <dbReference type="ChEBI" id="CHEBI:65315"/>
        <dbReference type="EC" id="5.4.99.27"/>
    </reaction>
</comment>
<comment type="similarity">
    <text evidence="1">Belongs to the pseudouridine synthase TruD family.</text>
</comment>
<evidence type="ECO:0000255" key="1">
    <source>
        <dbReference type="HAMAP-Rule" id="MF_01082"/>
    </source>
</evidence>
<feature type="chain" id="PRO_0000152521" description="tRNA pseudouridine synthase D">
    <location>
        <begin position="1"/>
        <end position="370"/>
    </location>
</feature>
<feature type="domain" description="TRUD" evidence="1">
    <location>
        <begin position="152"/>
        <end position="297"/>
    </location>
</feature>
<feature type="active site" description="Nucleophile" evidence="1">
    <location>
        <position position="77"/>
    </location>
</feature>
<gene>
    <name evidence="1" type="primary">truD</name>
    <name type="ordered locus">SO_3436</name>
</gene>
<keyword id="KW-0413">Isomerase</keyword>
<keyword id="KW-1185">Reference proteome</keyword>
<keyword id="KW-0819">tRNA processing</keyword>
<protein>
    <recommendedName>
        <fullName evidence="1">tRNA pseudouridine synthase D</fullName>
        <ecNumber evidence="1">5.4.99.27</ecNumber>
    </recommendedName>
    <alternativeName>
        <fullName evidence="1">tRNA pseudouridine(13) synthase</fullName>
    </alternativeName>
    <alternativeName>
        <fullName evidence="1">tRNA pseudouridylate synthase D</fullName>
    </alternativeName>
    <alternativeName>
        <fullName evidence="1">tRNA-uridine isomerase D</fullName>
    </alternativeName>
</protein>
<sequence>MSELHYLYGKPTGTADLRTVNSDFIVKEILPFSPSGEGEHHLVHIRKDGLNTVQVAEMLAKFAKVHPKEVTYAGQKDKNAITEQWFGIRIPGKETPAWIELNSDRLTVLSSSRHSKKLRIGALLGNRFILTLRNVTNVEDIISRIEKVSQIGVPNYFGEQRFGHDGKNLVLGRQMLAGKKVKDRNKRSMYLSAVRSHLFNTVVSYRLTHYGTRPLAGDCVMLAGSKSFFVTPEWDLVVLKRLIEKDIQLSAPLWGRGKMLPQGEAAEVETQAMADLTEDCYGLEHAGLEQERRPLLLEPQGLKHEQTSDGLVLEFILPAGCFATSLLRELVDYQDVKELQWQTTLTAETNVVTESNTAAANVSDNGESAS</sequence>
<dbReference type="EC" id="5.4.99.27" evidence="1"/>
<dbReference type="EMBL" id="AE014299">
    <property type="protein sequence ID" value="AAN56433.1"/>
    <property type="molecule type" value="Genomic_DNA"/>
</dbReference>
<dbReference type="RefSeq" id="NP_718989.1">
    <property type="nucleotide sequence ID" value="NC_004347.2"/>
</dbReference>
<dbReference type="RefSeq" id="WP_011073292.1">
    <property type="nucleotide sequence ID" value="NC_004347.2"/>
</dbReference>
<dbReference type="SMR" id="Q8EBR4"/>
<dbReference type="STRING" id="211586.SO_3436"/>
<dbReference type="PaxDb" id="211586-SO_3436"/>
<dbReference type="KEGG" id="son:SO_3436"/>
<dbReference type="PATRIC" id="fig|211586.12.peg.3331"/>
<dbReference type="eggNOG" id="COG0585">
    <property type="taxonomic scope" value="Bacteria"/>
</dbReference>
<dbReference type="HOGENOM" id="CLU_005281_4_0_6"/>
<dbReference type="OrthoDB" id="1550679at2"/>
<dbReference type="PhylomeDB" id="Q8EBR4"/>
<dbReference type="BioCyc" id="SONE211586:G1GMP-3207-MONOMER"/>
<dbReference type="Proteomes" id="UP000008186">
    <property type="component" value="Chromosome"/>
</dbReference>
<dbReference type="GO" id="GO:0005829">
    <property type="term" value="C:cytosol"/>
    <property type="evidence" value="ECO:0000318"/>
    <property type="project" value="GO_Central"/>
</dbReference>
<dbReference type="GO" id="GO:0009982">
    <property type="term" value="F:pseudouridine synthase activity"/>
    <property type="evidence" value="ECO:0000318"/>
    <property type="project" value="GO_Central"/>
</dbReference>
<dbReference type="GO" id="GO:0003723">
    <property type="term" value="F:RNA binding"/>
    <property type="evidence" value="ECO:0007669"/>
    <property type="project" value="InterPro"/>
</dbReference>
<dbReference type="GO" id="GO:0160150">
    <property type="term" value="F:tRNA pseudouridine(13) synthase activity"/>
    <property type="evidence" value="ECO:0007669"/>
    <property type="project" value="UniProtKB-EC"/>
</dbReference>
<dbReference type="GO" id="GO:0001522">
    <property type="term" value="P:pseudouridine synthesis"/>
    <property type="evidence" value="ECO:0000318"/>
    <property type="project" value="GO_Central"/>
</dbReference>
<dbReference type="GO" id="GO:0031119">
    <property type="term" value="P:tRNA pseudouridine synthesis"/>
    <property type="evidence" value="ECO:0007669"/>
    <property type="project" value="UniProtKB-UniRule"/>
</dbReference>
<dbReference type="CDD" id="cd02575">
    <property type="entry name" value="PseudoU_synth_EcTruD"/>
    <property type="match status" value="1"/>
</dbReference>
<dbReference type="Gene3D" id="3.30.2350.20">
    <property type="entry name" value="TruD, catalytic domain"/>
    <property type="match status" value="1"/>
</dbReference>
<dbReference type="Gene3D" id="3.30.2340.10">
    <property type="entry name" value="TruD, insertion domain"/>
    <property type="match status" value="1"/>
</dbReference>
<dbReference type="HAMAP" id="MF_01082">
    <property type="entry name" value="TruD"/>
    <property type="match status" value="1"/>
</dbReference>
<dbReference type="InterPro" id="IPR020103">
    <property type="entry name" value="PsdUridine_synth_cat_dom_sf"/>
</dbReference>
<dbReference type="InterPro" id="IPR001656">
    <property type="entry name" value="PsdUridine_synth_TruD"/>
</dbReference>
<dbReference type="InterPro" id="IPR020119">
    <property type="entry name" value="PsdUridine_synth_TruD_CS"/>
</dbReference>
<dbReference type="InterPro" id="IPR011760">
    <property type="entry name" value="PsdUridine_synth_TruD_insert"/>
</dbReference>
<dbReference type="InterPro" id="IPR042214">
    <property type="entry name" value="TruD_catalytic"/>
</dbReference>
<dbReference type="InterPro" id="IPR043165">
    <property type="entry name" value="TruD_insert_sf"/>
</dbReference>
<dbReference type="InterPro" id="IPR050170">
    <property type="entry name" value="TruD_pseudoU_synthase"/>
</dbReference>
<dbReference type="PANTHER" id="PTHR47811">
    <property type="entry name" value="TRNA PSEUDOURIDINE SYNTHASE D"/>
    <property type="match status" value="1"/>
</dbReference>
<dbReference type="PANTHER" id="PTHR47811:SF1">
    <property type="entry name" value="TRNA PSEUDOURIDINE SYNTHASE D"/>
    <property type="match status" value="1"/>
</dbReference>
<dbReference type="Pfam" id="PF01142">
    <property type="entry name" value="TruD"/>
    <property type="match status" value="2"/>
</dbReference>
<dbReference type="SUPFAM" id="SSF55120">
    <property type="entry name" value="Pseudouridine synthase"/>
    <property type="match status" value="1"/>
</dbReference>
<dbReference type="PROSITE" id="PS50984">
    <property type="entry name" value="TRUD"/>
    <property type="match status" value="1"/>
</dbReference>
<dbReference type="PROSITE" id="PS01268">
    <property type="entry name" value="UPF0024"/>
    <property type="match status" value="1"/>
</dbReference>
<proteinExistence type="inferred from homology"/>
<organism>
    <name type="scientific">Shewanella oneidensis (strain ATCC 700550 / JCM 31522 / CIP 106686 / LMG 19005 / NCIMB 14063 / MR-1)</name>
    <dbReference type="NCBI Taxonomy" id="211586"/>
    <lineage>
        <taxon>Bacteria</taxon>
        <taxon>Pseudomonadati</taxon>
        <taxon>Pseudomonadota</taxon>
        <taxon>Gammaproteobacteria</taxon>
        <taxon>Alteromonadales</taxon>
        <taxon>Shewanellaceae</taxon>
        <taxon>Shewanella</taxon>
    </lineage>
</organism>